<reference key="1">
    <citation type="journal article" date="2005" name="Nature">
        <title>The genome sequence of the rice blast fungus Magnaporthe grisea.</title>
        <authorList>
            <person name="Dean R.A."/>
            <person name="Talbot N.J."/>
            <person name="Ebbole D.J."/>
            <person name="Farman M.L."/>
            <person name="Mitchell T.K."/>
            <person name="Orbach M.J."/>
            <person name="Thon M.R."/>
            <person name="Kulkarni R."/>
            <person name="Xu J.-R."/>
            <person name="Pan H."/>
            <person name="Read N.D."/>
            <person name="Lee Y.-H."/>
            <person name="Carbone I."/>
            <person name="Brown D."/>
            <person name="Oh Y.Y."/>
            <person name="Donofrio N."/>
            <person name="Jeong J.S."/>
            <person name="Soanes D.M."/>
            <person name="Djonovic S."/>
            <person name="Kolomiets E."/>
            <person name="Rehmeyer C."/>
            <person name="Li W."/>
            <person name="Harding M."/>
            <person name="Kim S."/>
            <person name="Lebrun M.-H."/>
            <person name="Bohnert H."/>
            <person name="Coughlan S."/>
            <person name="Butler J."/>
            <person name="Calvo S.E."/>
            <person name="Ma L.-J."/>
            <person name="Nicol R."/>
            <person name="Purcell S."/>
            <person name="Nusbaum C."/>
            <person name="Galagan J.E."/>
            <person name="Birren B.W."/>
        </authorList>
    </citation>
    <scope>NUCLEOTIDE SEQUENCE [LARGE SCALE GENOMIC DNA]</scope>
    <source>
        <strain>70-15 / ATCC MYA-4617 / FGSC 8958</strain>
    </source>
</reference>
<reference key="2">
    <citation type="journal article" date="2008" name="Mol. Plant Microbe Interact.">
        <title>A putative MAP kinase kinase kinase, MCK1, is required for cell wall integrity and pathogenicity of the rice blast fungus, Magnaporthe oryzae.</title>
        <authorList>
            <person name="Jeon J."/>
            <person name="Goh J."/>
            <person name="Yoo S."/>
            <person name="Chi M.H."/>
            <person name="Choi J."/>
            <person name="Rho H.S."/>
            <person name="Park J."/>
            <person name="Han S.S."/>
            <person name="Kim B.R."/>
            <person name="Park S.Y."/>
            <person name="Kim S."/>
            <person name="Lee Y.H."/>
        </authorList>
    </citation>
    <scope>FUNCTION</scope>
    <scope>DISRUPTION PHENOTYPE</scope>
</reference>
<reference key="3">
    <citation type="journal article" date="2017" name="Environ. Microbiol.">
        <title>MST50 is involved in multiple MAP kinase signaling pathways in Magnaporthe oryzae.</title>
        <authorList>
            <person name="Li G."/>
            <person name="Zhang X."/>
            <person name="Tian H."/>
            <person name="Choi Y.E."/>
            <person name="Tao W.A."/>
            <person name="Xu J.R."/>
        </authorList>
    </citation>
    <scope>FUNCTION</scope>
    <scope>INTERACTION WITH MTS50 AND MIP11</scope>
</reference>
<protein>
    <recommendedName>
        <fullName evidence="6">Mitogen-activated protein kinase kinae kinase MCK1</fullName>
        <shortName evidence="6">MAPKKK MCK1</shortName>
        <ecNumber evidence="8">2.7.11.24</ecNumber>
    </recommendedName>
    <alternativeName>
        <fullName evidence="6">MEKK MCK1</fullName>
    </alternativeName>
</protein>
<dbReference type="EC" id="2.7.11.24" evidence="8"/>
<dbReference type="EMBL" id="CM001235">
    <property type="protein sequence ID" value="EHA48501.1"/>
    <property type="molecule type" value="Genomic_DNA"/>
</dbReference>
<dbReference type="RefSeq" id="XP_003718085.1">
    <property type="nucleotide sequence ID" value="XM_003718037.1"/>
</dbReference>
<dbReference type="SMR" id="G4NDR3"/>
<dbReference type="STRING" id="242507.G4NDR3"/>
<dbReference type="EnsemblFungi" id="MGG_00883T0">
    <property type="protein sequence ID" value="MGG_00883T0"/>
    <property type="gene ID" value="MGG_00883"/>
</dbReference>
<dbReference type="GeneID" id="2674608"/>
<dbReference type="KEGG" id="mgr:MGG_00883"/>
<dbReference type="VEuPathDB" id="FungiDB:MGG_00883"/>
<dbReference type="eggNOG" id="KOG0198">
    <property type="taxonomic scope" value="Eukaryota"/>
</dbReference>
<dbReference type="HOGENOM" id="CLU_000961_3_0_1"/>
<dbReference type="InParanoid" id="G4NDR3"/>
<dbReference type="OMA" id="MQISPKP"/>
<dbReference type="OrthoDB" id="266718at2759"/>
<dbReference type="PHI-base" id="PHI:11532"/>
<dbReference type="PHI-base" id="PHI:777"/>
<dbReference type="Proteomes" id="UP000009058">
    <property type="component" value="Chromosome 5"/>
</dbReference>
<dbReference type="GO" id="GO:0005524">
    <property type="term" value="F:ATP binding"/>
    <property type="evidence" value="ECO:0007669"/>
    <property type="project" value="UniProtKB-KW"/>
</dbReference>
<dbReference type="GO" id="GO:0004707">
    <property type="term" value="F:MAP kinase activity"/>
    <property type="evidence" value="ECO:0007669"/>
    <property type="project" value="UniProtKB-EC"/>
</dbReference>
<dbReference type="GO" id="GO:0051094">
    <property type="term" value="P:positive regulation of developmental process"/>
    <property type="evidence" value="ECO:0007669"/>
    <property type="project" value="UniProtKB-ARBA"/>
</dbReference>
<dbReference type="FunFam" id="1.10.510.10:FF:000182">
    <property type="entry name" value="MAP kinase kinase kinase mkh1"/>
    <property type="match status" value="1"/>
</dbReference>
<dbReference type="FunFam" id="3.30.200.20:FF:000387">
    <property type="entry name" value="Serine/threonine-protein kinase STE11"/>
    <property type="match status" value="1"/>
</dbReference>
<dbReference type="Gene3D" id="1.10.510.10">
    <property type="entry name" value="Transferase(Phosphotransferase) domain 1"/>
    <property type="match status" value="1"/>
</dbReference>
<dbReference type="InterPro" id="IPR011009">
    <property type="entry name" value="Kinase-like_dom_sf"/>
</dbReference>
<dbReference type="InterPro" id="IPR050538">
    <property type="entry name" value="MAP_kinase_kinase_kinase"/>
</dbReference>
<dbReference type="InterPro" id="IPR000719">
    <property type="entry name" value="Prot_kinase_dom"/>
</dbReference>
<dbReference type="InterPro" id="IPR017441">
    <property type="entry name" value="Protein_kinase_ATP_BS"/>
</dbReference>
<dbReference type="InterPro" id="IPR008271">
    <property type="entry name" value="Ser/Thr_kinase_AS"/>
</dbReference>
<dbReference type="PANTHER" id="PTHR48016">
    <property type="entry name" value="MAP KINASE KINASE KINASE SSK2-RELATED-RELATED"/>
    <property type="match status" value="1"/>
</dbReference>
<dbReference type="PANTHER" id="PTHR48016:SF48">
    <property type="entry name" value="SERINE_THREONINE-PROTEIN KINASE BCK1_SLK1_SSP31"/>
    <property type="match status" value="1"/>
</dbReference>
<dbReference type="Pfam" id="PF00069">
    <property type="entry name" value="Pkinase"/>
    <property type="match status" value="1"/>
</dbReference>
<dbReference type="SMART" id="SM00220">
    <property type="entry name" value="S_TKc"/>
    <property type="match status" value="1"/>
</dbReference>
<dbReference type="SUPFAM" id="SSF56112">
    <property type="entry name" value="Protein kinase-like (PK-like)"/>
    <property type="match status" value="1"/>
</dbReference>
<dbReference type="PROSITE" id="PS00107">
    <property type="entry name" value="PROTEIN_KINASE_ATP"/>
    <property type="match status" value="1"/>
</dbReference>
<dbReference type="PROSITE" id="PS50011">
    <property type="entry name" value="PROTEIN_KINASE_DOM"/>
    <property type="match status" value="1"/>
</dbReference>
<dbReference type="PROSITE" id="PS00108">
    <property type="entry name" value="PROTEIN_KINASE_ST"/>
    <property type="match status" value="1"/>
</dbReference>
<name>MCK1_PYRO7</name>
<comment type="function">
    <text evidence="1 4 5">Mitogen-activated protein kinase kinase kinase; part of the MCK1-MKK2-MPS1 MAP kinase (MAPK) signal transduction cascade that is essential for appressorium formation, penetration and invasive growth (PubMed:18393612, PubMed:28244240). Beside its role in pathogenesis, the MPS1 cascade is active in conidiation and cellular stress responses (By similarity). Targets downstream of the the MPS1-MAPK pathway include transcription factors MIG1 and SWI6, as well as GSK1 and MPG1 (PubMed:28244240).</text>
</comment>
<comment type="catalytic activity">
    <reaction evidence="8">
        <text>L-seryl-[protein] + ATP = O-phospho-L-seryl-[protein] + ADP + H(+)</text>
        <dbReference type="Rhea" id="RHEA:17989"/>
        <dbReference type="Rhea" id="RHEA-COMP:9863"/>
        <dbReference type="Rhea" id="RHEA-COMP:11604"/>
        <dbReference type="ChEBI" id="CHEBI:15378"/>
        <dbReference type="ChEBI" id="CHEBI:29999"/>
        <dbReference type="ChEBI" id="CHEBI:30616"/>
        <dbReference type="ChEBI" id="CHEBI:83421"/>
        <dbReference type="ChEBI" id="CHEBI:456216"/>
        <dbReference type="EC" id="2.7.11.24"/>
    </reaction>
    <physiologicalReaction direction="left-to-right" evidence="8">
        <dbReference type="Rhea" id="RHEA:17990"/>
    </physiologicalReaction>
</comment>
<comment type="catalytic activity">
    <reaction evidence="8">
        <text>L-threonyl-[protein] + ATP = O-phospho-L-threonyl-[protein] + ADP + H(+)</text>
        <dbReference type="Rhea" id="RHEA:46608"/>
        <dbReference type="Rhea" id="RHEA-COMP:11060"/>
        <dbReference type="Rhea" id="RHEA-COMP:11605"/>
        <dbReference type="ChEBI" id="CHEBI:15378"/>
        <dbReference type="ChEBI" id="CHEBI:30013"/>
        <dbReference type="ChEBI" id="CHEBI:30616"/>
        <dbReference type="ChEBI" id="CHEBI:61977"/>
        <dbReference type="ChEBI" id="CHEBI:456216"/>
        <dbReference type="EC" id="2.7.11.24"/>
    </reaction>
    <physiologicalReaction direction="left-to-right" evidence="8">
        <dbReference type="Rhea" id="RHEA:46609"/>
    </physiologicalReaction>
</comment>
<comment type="subunit">
    <text evidence="5">Interacts with the adapter protein MST50 and MIP11.</text>
</comment>
<comment type="disruption phenotype">
    <text evidence="4">Leads to hypersensitivity to cell-wall-degrading enzymes (PubMed:18393612). Reduces significantly numbers of conidia and develops appressoria in a slightly retarded manner (PubMed:18393612). Impairs the ability of appressoria to penetrate into plant tissues, thereby abolishing pathogenicity (PubMed:18393612).</text>
</comment>
<comment type="similarity">
    <text evidence="7">Belongs to the protein kinase superfamily. STE Ser/Thr protein kinase family. MAP kinase kinase kinase subfamily.</text>
</comment>
<evidence type="ECO:0000250" key="1">
    <source>
        <dbReference type="UniProtKB" id="G4N0Z0"/>
    </source>
</evidence>
<evidence type="ECO:0000255" key="2">
    <source>
        <dbReference type="PROSITE-ProRule" id="PRU00159"/>
    </source>
</evidence>
<evidence type="ECO:0000256" key="3">
    <source>
        <dbReference type="SAM" id="MobiDB-lite"/>
    </source>
</evidence>
<evidence type="ECO:0000269" key="4">
    <source>
    </source>
</evidence>
<evidence type="ECO:0000269" key="5">
    <source>
    </source>
</evidence>
<evidence type="ECO:0000303" key="6">
    <source>
    </source>
</evidence>
<evidence type="ECO:0000305" key="7"/>
<evidence type="ECO:0000305" key="8">
    <source>
    </source>
</evidence>
<feature type="chain" id="PRO_0000453098" description="Mitogen-activated protein kinase kinae kinase MCK1">
    <location>
        <begin position="1"/>
        <end position="1528"/>
    </location>
</feature>
<feature type="domain" description="Protein kinase" evidence="2">
    <location>
        <begin position="1238"/>
        <end position="1507"/>
    </location>
</feature>
<feature type="region of interest" description="Disordered" evidence="3">
    <location>
        <begin position="1"/>
        <end position="84"/>
    </location>
</feature>
<feature type="region of interest" description="Disordered" evidence="3">
    <location>
        <begin position="109"/>
        <end position="208"/>
    </location>
</feature>
<feature type="region of interest" description="Disordered" evidence="3">
    <location>
        <begin position="303"/>
        <end position="418"/>
    </location>
</feature>
<feature type="region of interest" description="Disordered" evidence="3">
    <location>
        <begin position="449"/>
        <end position="481"/>
    </location>
</feature>
<feature type="region of interest" description="Disordered" evidence="3">
    <location>
        <begin position="607"/>
        <end position="652"/>
    </location>
</feature>
<feature type="region of interest" description="Disordered" evidence="3">
    <location>
        <begin position="695"/>
        <end position="731"/>
    </location>
</feature>
<feature type="region of interest" description="Disordered" evidence="3">
    <location>
        <begin position="746"/>
        <end position="786"/>
    </location>
</feature>
<feature type="region of interest" description="Disordered" evidence="3">
    <location>
        <begin position="811"/>
        <end position="929"/>
    </location>
</feature>
<feature type="region of interest" description="Disordered" evidence="3">
    <location>
        <begin position="943"/>
        <end position="1012"/>
    </location>
</feature>
<feature type="region of interest" description="Disordered" evidence="3">
    <location>
        <begin position="1086"/>
        <end position="1191"/>
    </location>
</feature>
<feature type="compositionally biased region" description="Low complexity" evidence="3">
    <location>
        <begin position="1"/>
        <end position="11"/>
    </location>
</feature>
<feature type="compositionally biased region" description="Pro residues" evidence="3">
    <location>
        <begin position="12"/>
        <end position="21"/>
    </location>
</feature>
<feature type="compositionally biased region" description="Low complexity" evidence="3">
    <location>
        <begin position="22"/>
        <end position="31"/>
    </location>
</feature>
<feature type="compositionally biased region" description="Pro residues" evidence="3">
    <location>
        <begin position="53"/>
        <end position="64"/>
    </location>
</feature>
<feature type="compositionally biased region" description="Low complexity" evidence="3">
    <location>
        <begin position="157"/>
        <end position="173"/>
    </location>
</feature>
<feature type="compositionally biased region" description="Polar residues" evidence="3">
    <location>
        <begin position="174"/>
        <end position="183"/>
    </location>
</feature>
<feature type="compositionally biased region" description="Polar residues" evidence="3">
    <location>
        <begin position="191"/>
        <end position="205"/>
    </location>
</feature>
<feature type="compositionally biased region" description="Polar residues" evidence="3">
    <location>
        <begin position="318"/>
        <end position="327"/>
    </location>
</feature>
<feature type="compositionally biased region" description="Basic and acidic residues" evidence="3">
    <location>
        <begin position="328"/>
        <end position="337"/>
    </location>
</feature>
<feature type="compositionally biased region" description="Polar residues" evidence="3">
    <location>
        <begin position="338"/>
        <end position="363"/>
    </location>
</feature>
<feature type="compositionally biased region" description="Low complexity" evidence="3">
    <location>
        <begin position="396"/>
        <end position="408"/>
    </location>
</feature>
<feature type="compositionally biased region" description="Polar residues" evidence="3">
    <location>
        <begin position="409"/>
        <end position="418"/>
    </location>
</feature>
<feature type="compositionally biased region" description="Polar residues" evidence="3">
    <location>
        <begin position="613"/>
        <end position="622"/>
    </location>
</feature>
<feature type="compositionally biased region" description="Polar residues" evidence="3">
    <location>
        <begin position="630"/>
        <end position="641"/>
    </location>
</feature>
<feature type="compositionally biased region" description="Basic and acidic residues" evidence="3">
    <location>
        <begin position="642"/>
        <end position="652"/>
    </location>
</feature>
<feature type="compositionally biased region" description="Basic and acidic residues" evidence="3">
    <location>
        <begin position="698"/>
        <end position="714"/>
    </location>
</feature>
<feature type="compositionally biased region" description="Polar residues" evidence="3">
    <location>
        <begin position="846"/>
        <end position="860"/>
    </location>
</feature>
<feature type="compositionally biased region" description="Acidic residues" evidence="3">
    <location>
        <begin position="917"/>
        <end position="928"/>
    </location>
</feature>
<feature type="compositionally biased region" description="Polar residues" evidence="3">
    <location>
        <begin position="977"/>
        <end position="986"/>
    </location>
</feature>
<feature type="compositionally biased region" description="Basic and acidic residues" evidence="3">
    <location>
        <begin position="1001"/>
        <end position="1012"/>
    </location>
</feature>
<feature type="compositionally biased region" description="Polar residues" evidence="3">
    <location>
        <begin position="1086"/>
        <end position="1111"/>
    </location>
</feature>
<feature type="compositionally biased region" description="Basic and acidic residues" evidence="3">
    <location>
        <begin position="1142"/>
        <end position="1152"/>
    </location>
</feature>
<feature type="compositionally biased region" description="Polar residues" evidence="3">
    <location>
        <begin position="1158"/>
        <end position="1188"/>
    </location>
</feature>
<feature type="binding site" evidence="2">
    <location>
        <begin position="1244"/>
        <end position="1252"/>
    </location>
    <ligand>
        <name>ATP</name>
        <dbReference type="ChEBI" id="CHEBI:30616"/>
    </ligand>
</feature>
<feature type="binding site" evidence="2">
    <location>
        <position position="1267"/>
    </location>
    <ligand>
        <name>ATP</name>
        <dbReference type="ChEBI" id="CHEBI:30616"/>
    </ligand>
</feature>
<proteinExistence type="evidence at protein level"/>
<accession>G4NDR3</accession>
<sequence length="1528" mass="166014">MYPGSSQSRPYQVPPPPPMSPPLSQMHQQMSFVPPPPPPLNRYQTTPNLGASAPPPPPPGPPPASALNPQAPWNGAWGGVPAPRQAYDNRSGMYAQAPIQQYNPQAHAATAPGLNIPPPPLQTDAPMSDTYNPGQDPMFDGFMPDLSFDLEQETMGSSQTWQTTSSSSTNTASVNDNVQSNAPTEERTRRNNSASITGTQSSSNVPGIPSDITASWSLDKVIAWLQMNSFSRDWQETFKSLNIHGAQFLELGSGHFGRGNFGMMHQQVYPKLAKVCTASGTGWDQPREREEGKRMRRLIRGLVHARAVPDSARVPSSHGRQGSINSRGNDKGTHDGSDSPNTPSSQSRSTTIPTFPDGSSFSNHRGVLKNIDIDRHSSPKLNGDSPAASPNPVMASSTPKSSTLSVSPHSSRFGNNVRNSTDSVKAIYGSGIPADAQKMMSNSNLDELINGRGARQSPSDLGDNSAGTDSPVSARDTKLPFRQRMQAKDIDGNLSSPNGEGSLSPQMYRNGLGLDDYLRFKKPGGSIYLMATADGWNYRVVDVTDVETVLDLRSEISRGLGIPDEDGVEFYLTELGKSDHSQPLDDNQLMNHNKSRADAEGTLKLFVKPPPMSQQSTWSAGDTGQRHRFGTSSSMSRQQNTLKDDQSEEARLRAQREYKAEIDRKGREYLAIRKAKLESNNNGLSSSTEGIGIVGKPVDFDTPRHSPYEDKNTDRMFPTRNAPAPPVAPSATLNRVNSLMTGQRRVQGSMDGYPSQRVPPGVGTTTSPKEMSEDRRRQPMSGSQPMGGITSALVDMGRNLGGVALPNRGVSANNVPSKPSPPYRVATAPVSGRDFVSPDNRAAFPRSQTAGDLSPISQMPANFAAYQEPNPSPRGFGAAPVSSAAHKRAPSGPDIDFTEPEVSFDRPAPSTAQNEAQSDDDSGDDSDDGLFVIPIAARKASMKKAKSRASVTFDASDSGDGKRPALTVNTARDRKSVSFNSPQSARTGDDDDDSGRQRRTPKSDMWDSEDGKLGRRKSFKMDVWANRPPAEALINNLEDFFPGMDVDQPVLEEGDQEQNIDGSPVAPSPIAEVDETQSPGHLQINATPLNSLPPSRVQSMYNESDTLGSDESTLKALERPPSFQSLAQRSVRRSGGLGRMKSIREKARGAHEAHKRYTQTSMAAPQGLSRSGGTPATETQPTQNNSSALLRRKSTKMFNANIVQIRPNRDSMLVPDIPQDSISSSSRGAPKHPTTFRWFKGQLIGKGTYGRVYLGMNATTGEFLAVKEVEVNPRAAAGDKKRMKELVAALDQEIETMQHLDHVNIVQYLGCERKETSISIFLEYISGGSIGSCLRKNGKFEESVVQSLTRQTLSGLAYLHREGILHRDLKADNILLDVDGTAKISDFGISKKTDNIYGNDKSNSMQGSVFWMAPEVIRSQGEGYSAKVDIWSLGCVVLEMFAGRRPWAKEEAVGAIYKIANGEIPPIPEDVQDTISPIAVAFMMDCFTVDSHDRPTANKLLSQHPFCELDPNYNFLDSELYAKIRGTY</sequence>
<keyword id="KW-0067">ATP-binding</keyword>
<keyword id="KW-0418">Kinase</keyword>
<keyword id="KW-0547">Nucleotide-binding</keyword>
<keyword id="KW-1185">Reference proteome</keyword>
<keyword id="KW-0808">Transferase</keyword>
<keyword id="KW-0843">Virulence</keyword>
<gene>
    <name evidence="6" type="primary">MCK1</name>
    <name type="ORF">MGG_00883</name>
</gene>
<organism>
    <name type="scientific">Pyricularia oryzae (strain 70-15 / ATCC MYA-4617 / FGSC 8958)</name>
    <name type="common">Rice blast fungus</name>
    <name type="synonym">Magnaporthe oryzae</name>
    <dbReference type="NCBI Taxonomy" id="242507"/>
    <lineage>
        <taxon>Eukaryota</taxon>
        <taxon>Fungi</taxon>
        <taxon>Dikarya</taxon>
        <taxon>Ascomycota</taxon>
        <taxon>Pezizomycotina</taxon>
        <taxon>Sordariomycetes</taxon>
        <taxon>Sordariomycetidae</taxon>
        <taxon>Magnaporthales</taxon>
        <taxon>Pyriculariaceae</taxon>
        <taxon>Pyricularia</taxon>
    </lineage>
</organism>